<dbReference type="EC" id="3.1.1.1" evidence="9"/>
<dbReference type="EMBL" id="MW699017">
    <property type="protein sequence ID" value="QTW92354.1"/>
    <property type="molecule type" value="mRNA"/>
</dbReference>
<dbReference type="SMR" id="A0A8B0RBM2"/>
<dbReference type="GO" id="GO:0005576">
    <property type="term" value="C:extracellular region"/>
    <property type="evidence" value="ECO:0007669"/>
    <property type="project" value="UniProtKB-SubCell"/>
</dbReference>
<dbReference type="GO" id="GO:0052689">
    <property type="term" value="F:carboxylic ester hydrolase activity"/>
    <property type="evidence" value="ECO:0007669"/>
    <property type="project" value="UniProtKB-KW"/>
</dbReference>
<dbReference type="GO" id="GO:0016042">
    <property type="term" value="P:lipid catabolic process"/>
    <property type="evidence" value="ECO:0007669"/>
    <property type="project" value="UniProtKB-KW"/>
</dbReference>
<dbReference type="Gene3D" id="3.40.50.1820">
    <property type="entry name" value="alpha/beta hydrolase"/>
    <property type="match status" value="1"/>
</dbReference>
<dbReference type="InterPro" id="IPR029058">
    <property type="entry name" value="AB_hydrolase_fold"/>
</dbReference>
<dbReference type="InterPro" id="IPR002018">
    <property type="entry name" value="CarbesteraseB"/>
</dbReference>
<dbReference type="InterPro" id="IPR019826">
    <property type="entry name" value="Carboxylesterase_B_AS"/>
</dbReference>
<dbReference type="PANTHER" id="PTHR43142">
    <property type="entry name" value="CARBOXYLIC ESTER HYDROLASE"/>
    <property type="match status" value="1"/>
</dbReference>
<dbReference type="PANTHER" id="PTHR43142:SF1">
    <property type="entry name" value="CARBOXYLIC ESTER HYDROLASE"/>
    <property type="match status" value="1"/>
</dbReference>
<dbReference type="Pfam" id="PF00135">
    <property type="entry name" value="COesterase"/>
    <property type="match status" value="1"/>
</dbReference>
<dbReference type="SUPFAM" id="SSF53474">
    <property type="entry name" value="alpha/beta-Hydrolases"/>
    <property type="match status" value="1"/>
</dbReference>
<dbReference type="PROSITE" id="PS00122">
    <property type="entry name" value="CARBOXYLESTERASE_B_1"/>
    <property type="match status" value="1"/>
</dbReference>
<accession>A0A8B0RBM2</accession>
<name>ACES_BOMIG</name>
<sequence length="555" mass="62177">MELSVIALLLLGFVNFSWQNEQAPRVKTSLGDIRGYYKISRHGRKYEAYEGIPYAQPPVGNLRFKPPQPVQEWINELPAVEKGPVCTQYVVLSTPQNGDKVTGCEDCLYMNIYVPFRNGNESLLPVMFWIHGGAYQFGSGNKVNETLVMDRDVILVTFNYRLASFGFLSTGDSVVPGNMGLKDQNVALRWVHNHIRSFGGDPNQITIFGLSAGASSVHYHYLSRLSAGLFQRGISISGVALAPWAQTKYAPEKARRYAATLGCPTRNTKEMIDCLQTRPARILSQATGEVPDIYAPFGPVVDKYGPDPFITRSPIDIIVSGEAYDVPWISGVVSEEGLYISAAFVGNDQLLKQLNDDWDNIAPYLLDYNDTLPLNQHKEVAEKIRKYYLGSNPIDSNTSLSVTHMIGDRMFSVDFQKAAILKAKINKSPVWTYYYSYRSMHSCSEIVSGGSTKNFGVSHGDDAFLVLDTRISNVSRPNDLEMQQILLDFYTSFAIEGKPRAGDVQWQTLDPNEKEFQYLHIANPQNIKMETSNDSANINFWNTIDFNENKISGQE</sequence>
<protein>
    <recommendedName>
        <fullName evidence="8">Carboxylic ester hydrolase</fullName>
        <ecNumber evidence="9">3.1.1.1</ecNumber>
    </recommendedName>
    <alternativeName>
        <fullName evidence="7">Venom carboxylesterase</fullName>
        <shortName evidence="7">BivCaE</shortName>
    </alternativeName>
</protein>
<evidence type="ECO:0000250" key="1"/>
<evidence type="ECO:0000250" key="2">
    <source>
        <dbReference type="UniProtKB" id="P23141"/>
    </source>
</evidence>
<evidence type="ECO:0000255" key="3"/>
<evidence type="ECO:0000255" key="4">
    <source>
        <dbReference type="PROSITE-ProRule" id="PRU00498"/>
    </source>
</evidence>
<evidence type="ECO:0000255" key="5">
    <source>
        <dbReference type="PROSITE-ProRule" id="PRU10039"/>
    </source>
</evidence>
<evidence type="ECO:0000269" key="6">
    <source>
    </source>
</evidence>
<evidence type="ECO:0000303" key="7">
    <source>
    </source>
</evidence>
<evidence type="ECO:0000305" key="8"/>
<evidence type="ECO:0000305" key="9">
    <source>
    </source>
</evidence>
<evidence type="ECO:0000312" key="10">
    <source>
        <dbReference type="EMBL" id="QTW92354.1"/>
    </source>
</evidence>
<keyword id="KW-0020">Allergen</keyword>
<keyword id="KW-1015">Disulfide bond</keyword>
<keyword id="KW-0325">Glycoprotein</keyword>
<keyword id="KW-0378">Hydrolase</keyword>
<keyword id="KW-0442">Lipid degradation</keyword>
<keyword id="KW-0443">Lipid metabolism</keyword>
<keyword id="KW-0964">Secreted</keyword>
<keyword id="KW-0719">Serine esterase</keyword>
<keyword id="KW-0732">Signal</keyword>
<reference evidence="10" key="1">
    <citation type="journal article" date="2021" name="Toxins">
        <title>Lipolytic activity of a carboxylesterase from bumblebee (Bombus ignitus) venom.</title>
        <authorList>
            <person name="Deng Y."/>
            <person name="Kim B.Y."/>
            <person name="Lee K.Y."/>
            <person name="Yoon H.J."/>
            <person name="Wan H."/>
            <person name="Li J."/>
            <person name="Lee K.S."/>
            <person name="Jin B.R."/>
        </authorList>
    </citation>
    <scope>NUCLEOTIDE SEQUENCE [MRNA]</scope>
    <scope>FUNCTION</scope>
    <scope>CATALYTIC ACTIVITY</scope>
    <scope>SUBCELLULAR LOCATION</scope>
    <scope>TISSUE SPECIFICITY</scope>
    <scope>RECOMBINANT EXPRESSION</scope>
    <scope>BIOPHYSICOCHEMICAL PROPERTIES</scope>
    <scope>GLYCOSYLATION</scope>
</reference>
<comment type="function">
    <text evidence="6">Lipolytic agent that may be involved in distributing the venom via degradation of blood triglycerides. The recombinant protein degrades triglycerides and exhibits high lipolytic activity toward long-chain triglycerides (tested on tributyrin, trioctanoin and triolein). Does not affect mammalian cells.</text>
</comment>
<comment type="catalytic activity">
    <molecule>Carboxylic ester hydrolase</molecule>
    <reaction evidence="9">
        <text>a carboxylic ester + H2O = an alcohol + a carboxylate + H(+)</text>
        <dbReference type="Rhea" id="RHEA:21164"/>
        <dbReference type="ChEBI" id="CHEBI:15377"/>
        <dbReference type="ChEBI" id="CHEBI:15378"/>
        <dbReference type="ChEBI" id="CHEBI:29067"/>
        <dbReference type="ChEBI" id="CHEBI:30879"/>
        <dbReference type="ChEBI" id="CHEBI:33308"/>
        <dbReference type="EC" id="3.1.1.1"/>
    </reaction>
</comment>
<comment type="biophysicochemical properties">
    <phDependence>
        <text evidence="6">Optimum pH is 8.5.</text>
    </phDependence>
    <temperatureDependence>
        <text evidence="6">Optimum temperature is 40 degrees Celsius.</text>
    </temperatureDependence>
</comment>
<comment type="subcellular location">
    <subcellularLocation>
        <location evidence="6">Secreted</location>
    </subcellularLocation>
</comment>
<comment type="tissue specificity">
    <text evidence="6">Expressed in several tissues, including epidermis (at protein level), fat body (at protein level), gut (at protein level), muscle (at protein level), and venom gland (at protein level).</text>
</comment>
<comment type="PTM">
    <text evidence="6">N-glycosylated.</text>
</comment>
<comment type="allergen">
    <text evidence="1">Causes an allergic reaction in human.</text>
</comment>
<comment type="similarity">
    <text evidence="8">Belongs to the type-B carboxylesterase/lipase family.</text>
</comment>
<feature type="signal peptide" evidence="3">
    <location>
        <begin position="1"/>
        <end position="19"/>
    </location>
</feature>
<feature type="chain" id="PRO_5033096302" description="Carboxylic ester hydrolase">
    <location>
        <begin position="20"/>
        <end position="555"/>
    </location>
</feature>
<feature type="active site" description="Acyl-ester intermediate" evidence="2 5">
    <location>
        <position position="211"/>
    </location>
</feature>
<feature type="active site" description="Charge relay system" evidence="2">
    <location>
        <position position="336"/>
    </location>
</feature>
<feature type="active site" description="Charge relay system" evidence="2">
    <location>
        <position position="459"/>
    </location>
</feature>
<feature type="glycosylation site" description="N-linked (GlcNAc...) asparagine" evidence="4">
    <location>
        <position position="120"/>
    </location>
</feature>
<feature type="glycosylation site" description="N-linked (GlcNAc...) asparagine" evidence="4">
    <location>
        <position position="144"/>
    </location>
</feature>
<feature type="glycosylation site" description="N-linked (GlcNAc...) asparagine" evidence="4">
    <location>
        <position position="369"/>
    </location>
</feature>
<feature type="glycosylation site" description="N-linked (GlcNAc...) asparagine" evidence="4">
    <location>
        <position position="397"/>
    </location>
</feature>
<feature type="glycosylation site" description="N-linked (GlcNAc...) asparagine" evidence="4">
    <location>
        <position position="473"/>
    </location>
</feature>
<feature type="glycosylation site" description="N-linked (GlcNAc...) asparagine" evidence="4">
    <location>
        <position position="533"/>
    </location>
</feature>
<feature type="disulfide bond" evidence="2">
    <location>
        <begin position="86"/>
        <end position="107"/>
    </location>
</feature>
<feature type="disulfide bond" evidence="2">
    <location>
        <begin position="263"/>
        <end position="274"/>
    </location>
</feature>
<proteinExistence type="evidence at protein level"/>
<organism>
    <name type="scientific">Bombus ignitus</name>
    <name type="common">Bumblebee</name>
    <dbReference type="NCBI Taxonomy" id="130704"/>
    <lineage>
        <taxon>Eukaryota</taxon>
        <taxon>Metazoa</taxon>
        <taxon>Ecdysozoa</taxon>
        <taxon>Arthropoda</taxon>
        <taxon>Hexapoda</taxon>
        <taxon>Insecta</taxon>
        <taxon>Pterygota</taxon>
        <taxon>Neoptera</taxon>
        <taxon>Endopterygota</taxon>
        <taxon>Hymenoptera</taxon>
        <taxon>Apocrita</taxon>
        <taxon>Aculeata</taxon>
        <taxon>Apoidea</taxon>
        <taxon>Anthophila</taxon>
        <taxon>Apidae</taxon>
        <taxon>Bombus</taxon>
        <taxon>Bombus</taxon>
    </lineage>
</organism>
<gene>
    <name type="primary">vCaE</name>
</gene>